<protein>
    <recommendedName>
        <fullName evidence="1">Bacteriohemerythrin</fullName>
    </recommendedName>
</protein>
<name>HEMTB_STRM5</name>
<sequence length="153" mass="17929">MALLVWQDDLNIGIDVIDQQHRRIIEMLNHLHVAQTSMQRAAVGEVIDEVVDYTMSHFAFEEELMEEAGYPFCAAHKRVHEVFIKRVAEYRLRFQAGEDISDELRTMLSRWLFNHIRGDDQAYADQVKAHLNQFAREHQSGGWLGRTLKRFFG</sequence>
<evidence type="ECO:0000255" key="1">
    <source>
        <dbReference type="HAMAP-Rule" id="MF_00556"/>
    </source>
</evidence>
<organism>
    <name type="scientific">Stenotrophomonas maltophilia (strain R551-3)</name>
    <dbReference type="NCBI Taxonomy" id="391008"/>
    <lineage>
        <taxon>Bacteria</taxon>
        <taxon>Pseudomonadati</taxon>
        <taxon>Pseudomonadota</taxon>
        <taxon>Gammaproteobacteria</taxon>
        <taxon>Lysobacterales</taxon>
        <taxon>Lysobacteraceae</taxon>
        <taxon>Stenotrophomonas</taxon>
        <taxon>Stenotrophomonas maltophilia group</taxon>
    </lineage>
</organism>
<reference key="1">
    <citation type="submission" date="2008-06" db="EMBL/GenBank/DDBJ databases">
        <title>Complete sequence of Stenotrophomonas maltophilia R551-3.</title>
        <authorList>
            <consortium name="US DOE Joint Genome Institute"/>
            <person name="Lucas S."/>
            <person name="Copeland A."/>
            <person name="Lapidus A."/>
            <person name="Glavina del Rio T."/>
            <person name="Dalin E."/>
            <person name="Tice H."/>
            <person name="Pitluck S."/>
            <person name="Chain P."/>
            <person name="Malfatti S."/>
            <person name="Shin M."/>
            <person name="Vergez L."/>
            <person name="Lang D."/>
            <person name="Schmutz J."/>
            <person name="Larimer F."/>
            <person name="Land M."/>
            <person name="Hauser L."/>
            <person name="Kyrpides N."/>
            <person name="Mikhailova N."/>
            <person name="Taghavi S."/>
            <person name="Monchy S."/>
            <person name="Newman L."/>
            <person name="Vangronsveld J."/>
            <person name="van der Lelie D."/>
            <person name="Richardson P."/>
        </authorList>
    </citation>
    <scope>NUCLEOTIDE SEQUENCE [LARGE SCALE GENOMIC DNA]</scope>
    <source>
        <strain>R551-3</strain>
    </source>
</reference>
<keyword id="KW-0408">Iron</keyword>
<keyword id="KW-0479">Metal-binding</keyword>
<keyword id="KW-0561">Oxygen transport</keyword>
<keyword id="KW-0813">Transport</keyword>
<feature type="chain" id="PRO_1000129142" description="Bacteriohemerythrin">
    <location>
        <begin position="1"/>
        <end position="153"/>
    </location>
</feature>
<feature type="binding site" evidence="1">
    <location>
        <position position="21"/>
    </location>
    <ligand>
        <name>Fe cation</name>
        <dbReference type="ChEBI" id="CHEBI:24875"/>
        <label>1</label>
    </ligand>
</feature>
<feature type="binding site" evidence="1">
    <location>
        <position position="57"/>
    </location>
    <ligand>
        <name>Fe cation</name>
        <dbReference type="ChEBI" id="CHEBI:24875"/>
        <label>1</label>
    </ligand>
</feature>
<feature type="binding site" evidence="1">
    <location>
        <position position="61"/>
    </location>
    <ligand>
        <name>Fe cation</name>
        <dbReference type="ChEBI" id="CHEBI:24875"/>
        <label>1</label>
    </ligand>
</feature>
<feature type="binding site" evidence="1">
    <location>
        <position position="61"/>
    </location>
    <ligand>
        <name>Fe cation</name>
        <dbReference type="ChEBI" id="CHEBI:24875"/>
        <label>2</label>
    </ligand>
</feature>
<feature type="binding site" evidence="1">
    <location>
        <position position="76"/>
    </location>
    <ligand>
        <name>Fe cation</name>
        <dbReference type="ChEBI" id="CHEBI:24875"/>
        <label>2</label>
    </ligand>
</feature>
<feature type="binding site" evidence="1">
    <location>
        <position position="80"/>
    </location>
    <ligand>
        <name>Fe cation</name>
        <dbReference type="ChEBI" id="CHEBI:24875"/>
        <label>2</label>
    </ligand>
</feature>
<feature type="binding site" evidence="1">
    <location>
        <position position="115"/>
    </location>
    <ligand>
        <name>Fe cation</name>
        <dbReference type="ChEBI" id="CHEBI:24875"/>
        <label>2</label>
    </ligand>
</feature>
<feature type="binding site" evidence="1">
    <location>
        <position position="120"/>
    </location>
    <ligand>
        <name>Fe cation</name>
        <dbReference type="ChEBI" id="CHEBI:24875"/>
        <label>1</label>
    </ligand>
</feature>
<feature type="binding site" evidence="1">
    <location>
        <position position="120"/>
    </location>
    <ligand>
        <name>Fe cation</name>
        <dbReference type="ChEBI" id="CHEBI:24875"/>
        <label>2</label>
    </ligand>
</feature>
<gene>
    <name type="ordered locus">Smal_1333</name>
</gene>
<accession>B4SQI3</accession>
<proteinExistence type="inferred from homology"/>
<dbReference type="EMBL" id="CP001111">
    <property type="protein sequence ID" value="ACF51038.1"/>
    <property type="molecule type" value="Genomic_DNA"/>
</dbReference>
<dbReference type="RefSeq" id="WP_012510567.1">
    <property type="nucleotide sequence ID" value="NC_011071.1"/>
</dbReference>
<dbReference type="SMR" id="B4SQI3"/>
<dbReference type="STRING" id="391008.Smal_1333"/>
<dbReference type="KEGG" id="smt:Smal_1333"/>
<dbReference type="eggNOG" id="COG2703">
    <property type="taxonomic scope" value="Bacteria"/>
</dbReference>
<dbReference type="HOGENOM" id="CLU_086902_2_1_6"/>
<dbReference type="OrthoDB" id="1122424at2"/>
<dbReference type="Proteomes" id="UP000001867">
    <property type="component" value="Chromosome"/>
</dbReference>
<dbReference type="GO" id="GO:0005506">
    <property type="term" value="F:iron ion binding"/>
    <property type="evidence" value="ECO:0007669"/>
    <property type="project" value="UniProtKB-UniRule"/>
</dbReference>
<dbReference type="GO" id="GO:0005344">
    <property type="term" value="F:oxygen carrier activity"/>
    <property type="evidence" value="ECO:0007669"/>
    <property type="project" value="UniProtKB-UniRule"/>
</dbReference>
<dbReference type="CDD" id="cd12107">
    <property type="entry name" value="Hemerythrin"/>
    <property type="match status" value="1"/>
</dbReference>
<dbReference type="Gene3D" id="1.20.120.50">
    <property type="entry name" value="Hemerythrin-like"/>
    <property type="match status" value="1"/>
</dbReference>
<dbReference type="HAMAP" id="MF_00556">
    <property type="entry name" value="Hemerythrin"/>
    <property type="match status" value="1"/>
</dbReference>
<dbReference type="InterPro" id="IPR023504">
    <property type="entry name" value="Bacteriohemerythrin-like"/>
</dbReference>
<dbReference type="InterPro" id="IPR016131">
    <property type="entry name" value="Haemerythrin_Fe_BS"/>
</dbReference>
<dbReference type="InterPro" id="IPR050669">
    <property type="entry name" value="Hemerythrin"/>
</dbReference>
<dbReference type="InterPro" id="IPR012312">
    <property type="entry name" value="Hemerythrin-like"/>
</dbReference>
<dbReference type="InterPro" id="IPR035938">
    <property type="entry name" value="Hemerythrin-like_sf"/>
</dbReference>
<dbReference type="InterPro" id="IPR012827">
    <property type="entry name" value="Hemerythrin_metal-bd"/>
</dbReference>
<dbReference type="NCBIfam" id="NF033749">
    <property type="entry name" value="bact_hemeryth"/>
    <property type="match status" value="1"/>
</dbReference>
<dbReference type="NCBIfam" id="TIGR02481">
    <property type="entry name" value="hemeryth_dom"/>
    <property type="match status" value="1"/>
</dbReference>
<dbReference type="NCBIfam" id="NF002007">
    <property type="entry name" value="PRK00808.1"/>
    <property type="match status" value="1"/>
</dbReference>
<dbReference type="PANTHER" id="PTHR37164">
    <property type="entry name" value="BACTERIOHEMERYTHRIN"/>
    <property type="match status" value="1"/>
</dbReference>
<dbReference type="PANTHER" id="PTHR37164:SF1">
    <property type="entry name" value="BACTERIOHEMERYTHRIN"/>
    <property type="match status" value="1"/>
</dbReference>
<dbReference type="Pfam" id="PF01814">
    <property type="entry name" value="Hemerythrin"/>
    <property type="match status" value="1"/>
</dbReference>
<dbReference type="SUPFAM" id="SSF47188">
    <property type="entry name" value="Hemerythrin-like"/>
    <property type="match status" value="1"/>
</dbReference>
<dbReference type="PROSITE" id="PS00550">
    <property type="entry name" value="HEMERYTHRINS"/>
    <property type="match status" value="1"/>
</dbReference>
<comment type="function">
    <text evidence="1">Oxygen-binding protein. May be involved in a storage mechanism or for delivery to oxygen-requiring enzymes. The oxygen-binding site contains two iron atoms.</text>
</comment>
<comment type="subunit">
    <text evidence="1">Monomer.</text>
</comment>
<comment type="similarity">
    <text evidence="1">Belongs to the hemerythrin family.</text>
</comment>